<sequence>MEKTFPMTKEGLDKLKAELENLKLVKRPEVIDRIKVARSYGDLSENSEYEAAKDEQAFIEGRISTVETMIRYAEIVDNAKIAKDEVALGKNVTFVEVGETDEESYQIVGTAEADPFTGKISNESPIARVLIGKKVGDIVDVPLPVGEMTVKIVKVD</sequence>
<name>GREA_LACLM</name>
<evidence type="ECO:0000255" key="1">
    <source>
        <dbReference type="HAMAP-Rule" id="MF_00105"/>
    </source>
</evidence>
<comment type="function">
    <text evidence="1">Necessary for efficient RNA polymerase transcription elongation past template-encoded arresting sites. The arresting sites in DNA have the property of trapping a certain fraction of elongating RNA polymerases that pass through, resulting in locked ternary complexes. Cleavage of the nascent transcript by cleavage factors such as GreA or GreB allows the resumption of elongation from the new 3'terminus. GreA releases sequences of 2 to 3 nucleotides.</text>
</comment>
<comment type="similarity">
    <text evidence="1">Belongs to the GreA/GreB family.</text>
</comment>
<accession>A2RIW3</accession>
<protein>
    <recommendedName>
        <fullName evidence="1">Transcription elongation factor GreA</fullName>
    </recommendedName>
    <alternativeName>
        <fullName evidence="1">Transcript cleavage factor GreA</fullName>
    </alternativeName>
</protein>
<reference key="1">
    <citation type="journal article" date="2007" name="J. Bacteriol.">
        <title>The complete genome sequence of the lactic acid bacterial paradigm Lactococcus lactis subsp. cremoris MG1363.</title>
        <authorList>
            <person name="Wegmann U."/>
            <person name="O'Connell-Motherway M."/>
            <person name="Zomer A."/>
            <person name="Buist G."/>
            <person name="Shearman C."/>
            <person name="Canchaya C."/>
            <person name="Ventura M."/>
            <person name="Goesmann A."/>
            <person name="Gasson M.J."/>
            <person name="Kuipers O.P."/>
            <person name="van Sinderen D."/>
            <person name="Kok J."/>
        </authorList>
    </citation>
    <scope>NUCLEOTIDE SEQUENCE [LARGE SCALE GENOMIC DNA]</scope>
    <source>
        <strain>MG1363</strain>
    </source>
</reference>
<gene>
    <name evidence="1" type="primary">greA</name>
    <name type="ordered locus">llmg_0610</name>
</gene>
<feature type="chain" id="PRO_1000034267" description="Transcription elongation factor GreA">
    <location>
        <begin position="1"/>
        <end position="156"/>
    </location>
</feature>
<feature type="coiled-coil region" evidence="1">
    <location>
        <begin position="2"/>
        <end position="27"/>
    </location>
</feature>
<organism>
    <name type="scientific">Lactococcus lactis subsp. cremoris (strain MG1363)</name>
    <dbReference type="NCBI Taxonomy" id="416870"/>
    <lineage>
        <taxon>Bacteria</taxon>
        <taxon>Bacillati</taxon>
        <taxon>Bacillota</taxon>
        <taxon>Bacilli</taxon>
        <taxon>Lactobacillales</taxon>
        <taxon>Streptococcaceae</taxon>
        <taxon>Lactococcus</taxon>
        <taxon>Lactococcus cremoris subsp. cremoris</taxon>
    </lineage>
</organism>
<dbReference type="EMBL" id="AM406671">
    <property type="protein sequence ID" value="CAL97210.1"/>
    <property type="molecule type" value="Genomic_DNA"/>
</dbReference>
<dbReference type="RefSeq" id="WP_011834626.1">
    <property type="nucleotide sequence ID" value="NC_009004.1"/>
</dbReference>
<dbReference type="SMR" id="A2RIW3"/>
<dbReference type="STRING" id="416870.llmg_0610"/>
<dbReference type="GeneID" id="61108914"/>
<dbReference type="KEGG" id="llm:llmg_0610"/>
<dbReference type="eggNOG" id="COG0782">
    <property type="taxonomic scope" value="Bacteria"/>
</dbReference>
<dbReference type="HOGENOM" id="CLU_101379_2_1_9"/>
<dbReference type="OrthoDB" id="9808774at2"/>
<dbReference type="PhylomeDB" id="A2RIW3"/>
<dbReference type="Proteomes" id="UP000000364">
    <property type="component" value="Chromosome"/>
</dbReference>
<dbReference type="GO" id="GO:0003677">
    <property type="term" value="F:DNA binding"/>
    <property type="evidence" value="ECO:0007669"/>
    <property type="project" value="UniProtKB-UniRule"/>
</dbReference>
<dbReference type="GO" id="GO:0070063">
    <property type="term" value="F:RNA polymerase binding"/>
    <property type="evidence" value="ECO:0007669"/>
    <property type="project" value="InterPro"/>
</dbReference>
<dbReference type="GO" id="GO:0006354">
    <property type="term" value="P:DNA-templated transcription elongation"/>
    <property type="evidence" value="ECO:0007669"/>
    <property type="project" value="TreeGrafter"/>
</dbReference>
<dbReference type="GO" id="GO:0032784">
    <property type="term" value="P:regulation of DNA-templated transcription elongation"/>
    <property type="evidence" value="ECO:0007669"/>
    <property type="project" value="UniProtKB-UniRule"/>
</dbReference>
<dbReference type="FunFam" id="1.10.287.180:FF:000001">
    <property type="entry name" value="Transcription elongation factor GreA"/>
    <property type="match status" value="1"/>
</dbReference>
<dbReference type="FunFam" id="3.10.50.30:FF:000001">
    <property type="entry name" value="Transcription elongation factor GreA"/>
    <property type="match status" value="1"/>
</dbReference>
<dbReference type="Gene3D" id="3.10.50.30">
    <property type="entry name" value="Transcription elongation factor, GreA/GreB, C-terminal domain"/>
    <property type="match status" value="1"/>
</dbReference>
<dbReference type="Gene3D" id="1.10.287.180">
    <property type="entry name" value="Transcription elongation factor, GreA/GreB, N-terminal domain"/>
    <property type="match status" value="1"/>
</dbReference>
<dbReference type="HAMAP" id="MF_00105">
    <property type="entry name" value="GreA_GreB"/>
    <property type="match status" value="1"/>
</dbReference>
<dbReference type="InterPro" id="IPR036953">
    <property type="entry name" value="GreA/GreB_C_sf"/>
</dbReference>
<dbReference type="InterPro" id="IPR018151">
    <property type="entry name" value="TF_GreA/GreB_CS"/>
</dbReference>
<dbReference type="InterPro" id="IPR006359">
    <property type="entry name" value="Tscrpt_elong_fac_GreA"/>
</dbReference>
<dbReference type="InterPro" id="IPR028624">
    <property type="entry name" value="Tscrpt_elong_fac_GreA/B"/>
</dbReference>
<dbReference type="InterPro" id="IPR001437">
    <property type="entry name" value="Tscrpt_elong_fac_GreA/B_C"/>
</dbReference>
<dbReference type="InterPro" id="IPR023459">
    <property type="entry name" value="Tscrpt_elong_fac_GreA/B_fam"/>
</dbReference>
<dbReference type="InterPro" id="IPR022691">
    <property type="entry name" value="Tscrpt_elong_fac_GreA/B_N"/>
</dbReference>
<dbReference type="InterPro" id="IPR036805">
    <property type="entry name" value="Tscrpt_elong_fac_GreA/B_N_sf"/>
</dbReference>
<dbReference type="NCBIfam" id="TIGR01462">
    <property type="entry name" value="greA"/>
    <property type="match status" value="1"/>
</dbReference>
<dbReference type="NCBIfam" id="NF001260">
    <property type="entry name" value="PRK00226.1-1"/>
    <property type="match status" value="1"/>
</dbReference>
<dbReference type="NCBIfam" id="NF001261">
    <property type="entry name" value="PRK00226.1-2"/>
    <property type="match status" value="1"/>
</dbReference>
<dbReference type="NCBIfam" id="NF001263">
    <property type="entry name" value="PRK00226.1-4"/>
    <property type="match status" value="1"/>
</dbReference>
<dbReference type="PANTHER" id="PTHR30437">
    <property type="entry name" value="TRANSCRIPTION ELONGATION FACTOR GREA"/>
    <property type="match status" value="1"/>
</dbReference>
<dbReference type="PANTHER" id="PTHR30437:SF4">
    <property type="entry name" value="TRANSCRIPTION ELONGATION FACTOR GREA"/>
    <property type="match status" value="1"/>
</dbReference>
<dbReference type="Pfam" id="PF01272">
    <property type="entry name" value="GreA_GreB"/>
    <property type="match status" value="1"/>
</dbReference>
<dbReference type="Pfam" id="PF03449">
    <property type="entry name" value="GreA_GreB_N"/>
    <property type="match status" value="1"/>
</dbReference>
<dbReference type="PIRSF" id="PIRSF006092">
    <property type="entry name" value="GreA_GreB"/>
    <property type="match status" value="1"/>
</dbReference>
<dbReference type="SUPFAM" id="SSF54534">
    <property type="entry name" value="FKBP-like"/>
    <property type="match status" value="1"/>
</dbReference>
<dbReference type="SUPFAM" id="SSF46557">
    <property type="entry name" value="GreA transcript cleavage protein, N-terminal domain"/>
    <property type="match status" value="1"/>
</dbReference>
<dbReference type="PROSITE" id="PS00829">
    <property type="entry name" value="GREAB_1"/>
    <property type="match status" value="1"/>
</dbReference>
<proteinExistence type="inferred from homology"/>
<keyword id="KW-0175">Coiled coil</keyword>
<keyword id="KW-0238">DNA-binding</keyword>
<keyword id="KW-0804">Transcription</keyword>
<keyword id="KW-0805">Transcription regulation</keyword>